<gene>
    <name evidence="1" type="primary">sfsA</name>
    <name type="ordered locus">CGSHiGG_10065</name>
</gene>
<proteinExistence type="inferred from homology"/>
<feature type="chain" id="PRO_1000007986" description="Sugar fermentation stimulation protein homolog">
    <location>
        <begin position="1"/>
        <end position="238"/>
    </location>
</feature>
<reference key="1">
    <citation type="journal article" date="2007" name="Genome Biol.">
        <title>Characterization and modeling of the Haemophilus influenzae core and supragenomes based on the complete genomic sequences of Rd and 12 clinical nontypeable strains.</title>
        <authorList>
            <person name="Hogg J.S."/>
            <person name="Hu F.Z."/>
            <person name="Janto B."/>
            <person name="Boissy R."/>
            <person name="Hayes J."/>
            <person name="Keefe R."/>
            <person name="Post J.C."/>
            <person name="Ehrlich G.D."/>
        </authorList>
    </citation>
    <scope>NUCLEOTIDE SEQUENCE [LARGE SCALE GENOMIC DNA]</scope>
    <source>
        <strain>PittGG</strain>
    </source>
</reference>
<organism>
    <name type="scientific">Haemophilus influenzae (strain PittGG)</name>
    <dbReference type="NCBI Taxonomy" id="374931"/>
    <lineage>
        <taxon>Bacteria</taxon>
        <taxon>Pseudomonadati</taxon>
        <taxon>Pseudomonadota</taxon>
        <taxon>Gammaproteobacteria</taxon>
        <taxon>Pasteurellales</taxon>
        <taxon>Pasteurellaceae</taxon>
        <taxon>Haemophilus</taxon>
    </lineage>
</organism>
<accession>A5UJ18</accession>
<comment type="similarity">
    <text evidence="1">Belongs to the SfsA family.</text>
</comment>
<dbReference type="EMBL" id="CP000672">
    <property type="protein sequence ID" value="ABR00774.1"/>
    <property type="molecule type" value="Genomic_DNA"/>
</dbReference>
<dbReference type="SMR" id="A5UJ18"/>
<dbReference type="KEGG" id="hiq:CGSHiGG_10065"/>
<dbReference type="HOGENOM" id="CLU_052299_2_0_6"/>
<dbReference type="Proteomes" id="UP000001990">
    <property type="component" value="Chromosome"/>
</dbReference>
<dbReference type="GO" id="GO:0003677">
    <property type="term" value="F:DNA binding"/>
    <property type="evidence" value="ECO:0007669"/>
    <property type="project" value="InterPro"/>
</dbReference>
<dbReference type="CDD" id="cd22359">
    <property type="entry name" value="SfsA-like_bacterial"/>
    <property type="match status" value="1"/>
</dbReference>
<dbReference type="FunFam" id="2.40.50.580:FF:000001">
    <property type="entry name" value="Sugar fermentation stimulation protein A"/>
    <property type="match status" value="1"/>
</dbReference>
<dbReference type="FunFam" id="3.40.1350.60:FF:000001">
    <property type="entry name" value="Sugar fermentation stimulation protein A"/>
    <property type="match status" value="1"/>
</dbReference>
<dbReference type="Gene3D" id="2.40.50.580">
    <property type="match status" value="1"/>
</dbReference>
<dbReference type="Gene3D" id="3.40.1350.60">
    <property type="match status" value="1"/>
</dbReference>
<dbReference type="HAMAP" id="MF_00095">
    <property type="entry name" value="SfsA"/>
    <property type="match status" value="1"/>
</dbReference>
<dbReference type="InterPro" id="IPR005224">
    <property type="entry name" value="SfsA"/>
</dbReference>
<dbReference type="InterPro" id="IPR040452">
    <property type="entry name" value="SfsA_C"/>
</dbReference>
<dbReference type="InterPro" id="IPR041465">
    <property type="entry name" value="SfsA_N"/>
</dbReference>
<dbReference type="NCBIfam" id="TIGR00230">
    <property type="entry name" value="sfsA"/>
    <property type="match status" value="1"/>
</dbReference>
<dbReference type="PANTHER" id="PTHR30545">
    <property type="entry name" value="SUGAR FERMENTATION STIMULATION PROTEIN A"/>
    <property type="match status" value="1"/>
</dbReference>
<dbReference type="PANTHER" id="PTHR30545:SF2">
    <property type="entry name" value="SUGAR FERMENTATION STIMULATION PROTEIN A"/>
    <property type="match status" value="1"/>
</dbReference>
<dbReference type="Pfam" id="PF03749">
    <property type="entry name" value="SfsA"/>
    <property type="match status" value="1"/>
</dbReference>
<dbReference type="Pfam" id="PF17746">
    <property type="entry name" value="SfsA_N"/>
    <property type="match status" value="1"/>
</dbReference>
<name>SFSA_HAEIG</name>
<evidence type="ECO:0000255" key="1">
    <source>
        <dbReference type="HAMAP-Rule" id="MF_00095"/>
    </source>
</evidence>
<sequence length="238" mass="26986">MQLPALQSAKLIRRYKRFLADIELPTGDVMTIHCANTGAMTGCGEKGDTIWYSHSDSQTRKYPHSWELTQLANGQLCCINTHRSNQLVFEALQNKQIKELAMYDEIYPEVKYGEENSRIDFLLKGKGLPDCYVEVKSITLVKGNLGMFPDAVTTRGQKHVRELLAMKKQGHRAVVLFAGLHNGFDRFKIAEYIDPEYDRLLKEAMEQGVEAYAYAGQFEISNEIPTALSLTESVPYIK</sequence>
<protein>
    <recommendedName>
        <fullName evidence="1">Sugar fermentation stimulation protein homolog</fullName>
    </recommendedName>
</protein>